<dbReference type="EC" id="4.2.1.126" evidence="1"/>
<dbReference type="EMBL" id="CR378675">
    <property type="protein sequence ID" value="CAG22140.1"/>
    <property type="molecule type" value="Genomic_DNA"/>
</dbReference>
<dbReference type="RefSeq" id="WP_011220357.1">
    <property type="nucleotide sequence ID" value="NC_006371.1"/>
</dbReference>
<dbReference type="SMR" id="Q6LL16"/>
<dbReference type="STRING" id="298386.PBPRB0267"/>
<dbReference type="KEGG" id="ppr:PBPRB0267"/>
<dbReference type="eggNOG" id="COG2103">
    <property type="taxonomic scope" value="Bacteria"/>
</dbReference>
<dbReference type="HOGENOM" id="CLU_049049_1_1_6"/>
<dbReference type="UniPathway" id="UPA00342"/>
<dbReference type="UniPathway" id="UPA00343"/>
<dbReference type="UniPathway" id="UPA00544"/>
<dbReference type="Proteomes" id="UP000000593">
    <property type="component" value="Chromosome 2"/>
</dbReference>
<dbReference type="GO" id="GO:0097367">
    <property type="term" value="F:carbohydrate derivative binding"/>
    <property type="evidence" value="ECO:0007669"/>
    <property type="project" value="InterPro"/>
</dbReference>
<dbReference type="GO" id="GO:0016835">
    <property type="term" value="F:carbon-oxygen lyase activity"/>
    <property type="evidence" value="ECO:0007669"/>
    <property type="project" value="UniProtKB-UniRule"/>
</dbReference>
<dbReference type="GO" id="GO:0016803">
    <property type="term" value="F:ether hydrolase activity"/>
    <property type="evidence" value="ECO:0007669"/>
    <property type="project" value="TreeGrafter"/>
</dbReference>
<dbReference type="GO" id="GO:0097175">
    <property type="term" value="P:1,6-anhydro-N-acetyl-beta-muramic acid catabolic process"/>
    <property type="evidence" value="ECO:0007669"/>
    <property type="project" value="UniProtKB-UniRule"/>
</dbReference>
<dbReference type="GO" id="GO:0046348">
    <property type="term" value="P:amino sugar catabolic process"/>
    <property type="evidence" value="ECO:0007669"/>
    <property type="project" value="InterPro"/>
</dbReference>
<dbReference type="GO" id="GO:0097173">
    <property type="term" value="P:N-acetylmuramic acid catabolic process"/>
    <property type="evidence" value="ECO:0007669"/>
    <property type="project" value="UniProtKB-UniPathway"/>
</dbReference>
<dbReference type="GO" id="GO:0009254">
    <property type="term" value="P:peptidoglycan turnover"/>
    <property type="evidence" value="ECO:0007669"/>
    <property type="project" value="UniProtKB-UniRule"/>
</dbReference>
<dbReference type="CDD" id="cd05007">
    <property type="entry name" value="SIS_Etherase"/>
    <property type="match status" value="1"/>
</dbReference>
<dbReference type="FunFam" id="1.10.8.1080:FF:000001">
    <property type="entry name" value="N-acetylmuramic acid 6-phosphate etherase"/>
    <property type="match status" value="1"/>
</dbReference>
<dbReference type="FunFam" id="3.40.50.10490:FF:000014">
    <property type="entry name" value="N-acetylmuramic acid 6-phosphate etherase"/>
    <property type="match status" value="1"/>
</dbReference>
<dbReference type="Gene3D" id="1.10.8.1080">
    <property type="match status" value="1"/>
</dbReference>
<dbReference type="Gene3D" id="3.40.50.10490">
    <property type="entry name" value="Glucose-6-phosphate isomerase like protein, domain 1"/>
    <property type="match status" value="1"/>
</dbReference>
<dbReference type="HAMAP" id="MF_00068">
    <property type="entry name" value="MurQ"/>
    <property type="match status" value="1"/>
</dbReference>
<dbReference type="InterPro" id="IPR005488">
    <property type="entry name" value="Etherase_MurQ"/>
</dbReference>
<dbReference type="InterPro" id="IPR005486">
    <property type="entry name" value="Glucokinase_regulatory_CS"/>
</dbReference>
<dbReference type="InterPro" id="IPR040190">
    <property type="entry name" value="MURQ/GCKR"/>
</dbReference>
<dbReference type="InterPro" id="IPR001347">
    <property type="entry name" value="SIS_dom"/>
</dbReference>
<dbReference type="InterPro" id="IPR046348">
    <property type="entry name" value="SIS_dom_sf"/>
</dbReference>
<dbReference type="NCBIfam" id="TIGR00274">
    <property type="entry name" value="N-acetylmuramic acid 6-phosphate etherase"/>
    <property type="match status" value="1"/>
</dbReference>
<dbReference type="NCBIfam" id="NF003915">
    <property type="entry name" value="PRK05441.1"/>
    <property type="match status" value="1"/>
</dbReference>
<dbReference type="NCBIfam" id="NF009222">
    <property type="entry name" value="PRK12570.1"/>
    <property type="match status" value="1"/>
</dbReference>
<dbReference type="PANTHER" id="PTHR10088">
    <property type="entry name" value="GLUCOKINASE REGULATORY PROTEIN"/>
    <property type="match status" value="1"/>
</dbReference>
<dbReference type="PANTHER" id="PTHR10088:SF4">
    <property type="entry name" value="GLUCOKINASE REGULATORY PROTEIN"/>
    <property type="match status" value="1"/>
</dbReference>
<dbReference type="Pfam" id="PF22645">
    <property type="entry name" value="GKRP_SIS_N"/>
    <property type="match status" value="1"/>
</dbReference>
<dbReference type="SUPFAM" id="SSF53697">
    <property type="entry name" value="SIS domain"/>
    <property type="match status" value="1"/>
</dbReference>
<dbReference type="PROSITE" id="PS01272">
    <property type="entry name" value="GCKR"/>
    <property type="match status" value="1"/>
</dbReference>
<dbReference type="PROSITE" id="PS51464">
    <property type="entry name" value="SIS"/>
    <property type="match status" value="1"/>
</dbReference>
<keyword id="KW-0119">Carbohydrate metabolism</keyword>
<keyword id="KW-0456">Lyase</keyword>
<keyword id="KW-1185">Reference proteome</keyword>
<gene>
    <name evidence="1" type="primary">murQ</name>
    <name type="ordered locus">PBPRB0267</name>
</gene>
<comment type="function">
    <text evidence="1">Specifically catalyzes the cleavage of the D-lactyl ether substituent of MurNAc 6-phosphate, producing GlcNAc 6-phosphate and D-lactate. Together with AnmK, is also required for the utilization of anhydro-N-acetylmuramic acid (anhMurNAc) either imported from the medium or derived from its own cell wall murein, and thus plays a role in cell wall recycling.</text>
</comment>
<comment type="catalytic activity">
    <reaction evidence="1">
        <text>N-acetyl-D-muramate 6-phosphate + H2O = N-acetyl-D-glucosamine 6-phosphate + (R)-lactate</text>
        <dbReference type="Rhea" id="RHEA:26410"/>
        <dbReference type="ChEBI" id="CHEBI:15377"/>
        <dbReference type="ChEBI" id="CHEBI:16004"/>
        <dbReference type="ChEBI" id="CHEBI:57513"/>
        <dbReference type="ChEBI" id="CHEBI:58722"/>
        <dbReference type="EC" id="4.2.1.126"/>
    </reaction>
</comment>
<comment type="pathway">
    <text evidence="1">Amino-sugar metabolism; 1,6-anhydro-N-acetylmuramate degradation.</text>
</comment>
<comment type="pathway">
    <text evidence="1">Amino-sugar metabolism; N-acetylmuramate degradation.</text>
</comment>
<comment type="pathway">
    <text evidence="1">Cell wall biogenesis; peptidoglycan recycling.</text>
</comment>
<comment type="subunit">
    <text evidence="1">Homodimer.</text>
</comment>
<comment type="miscellaneous">
    <text evidence="1">A lyase-type mechanism (elimination/hydration) is suggested for the cleavage of the lactyl ether bond of MurNAc 6-phosphate, with the formation of an alpha,beta-unsaturated aldehyde intermediate with (E)-stereochemistry, followed by the syn addition of water to give product.</text>
</comment>
<comment type="similarity">
    <text evidence="1">Belongs to the GCKR-like family. MurNAc-6-P etherase subfamily.</text>
</comment>
<accession>Q6LL16</accession>
<name>MURQ_PHOPR</name>
<protein>
    <recommendedName>
        <fullName evidence="1">N-acetylmuramic acid 6-phosphate etherase</fullName>
        <shortName evidence="1">MurNAc-6-P etherase</shortName>
        <ecNumber evidence="1">4.2.1.126</ecNumber>
    </recommendedName>
    <alternativeName>
        <fullName evidence="1">N-acetylmuramic acid 6-phosphate hydrolase</fullName>
    </alternativeName>
    <alternativeName>
        <fullName evidence="1">N-acetylmuramic acid 6-phosphate lyase</fullName>
    </alternativeName>
</protein>
<feature type="chain" id="PRO_0000249638" description="N-acetylmuramic acid 6-phosphate etherase">
    <location>
        <begin position="1"/>
        <end position="301"/>
    </location>
</feature>
<feature type="domain" description="SIS" evidence="1">
    <location>
        <begin position="57"/>
        <end position="220"/>
    </location>
</feature>
<feature type="active site" description="Proton donor" evidence="1">
    <location>
        <position position="85"/>
    </location>
</feature>
<feature type="active site" evidence="1">
    <location>
        <position position="116"/>
    </location>
</feature>
<organism>
    <name type="scientific">Photobacterium profundum (strain SS9)</name>
    <dbReference type="NCBI Taxonomy" id="298386"/>
    <lineage>
        <taxon>Bacteria</taxon>
        <taxon>Pseudomonadati</taxon>
        <taxon>Pseudomonadota</taxon>
        <taxon>Gammaproteobacteria</taxon>
        <taxon>Vibrionales</taxon>
        <taxon>Vibrionaceae</taxon>
        <taxon>Photobacterium</taxon>
    </lineage>
</organism>
<evidence type="ECO:0000255" key="1">
    <source>
        <dbReference type="HAMAP-Rule" id="MF_00068"/>
    </source>
</evidence>
<reference key="1">
    <citation type="journal article" date="2005" name="Science">
        <title>Life at depth: Photobacterium profundum genome sequence and expression analysis.</title>
        <authorList>
            <person name="Vezzi A."/>
            <person name="Campanaro S."/>
            <person name="D'Angelo M."/>
            <person name="Simonato F."/>
            <person name="Vitulo N."/>
            <person name="Lauro F.M."/>
            <person name="Cestaro A."/>
            <person name="Malacrida G."/>
            <person name="Simionati B."/>
            <person name="Cannata N."/>
            <person name="Romualdi C."/>
            <person name="Bartlett D.H."/>
            <person name="Valle G."/>
        </authorList>
    </citation>
    <scope>NUCLEOTIDE SEQUENCE [LARGE SCALE GENOMIC DNA]</scope>
    <source>
        <strain>ATCC BAA-1253 / SS9</strain>
    </source>
</reference>
<proteinExistence type="inferred from homology"/>
<sequence>MKIDLTNLITESRNTASQHIDTLSTIDMLKVINDEDKKVALAVEKTLPEISQVVDAITEAFKKGGRLIYTGAGTSGRLGILDASECPPTYGSKPEQVVGLIAGGHTAILRAVENAEDNRELGEGDLKGLNFNEKDVLVGIAASGRTPYVLGAMAYAKSVNATVACISCNPNSPMTAAADISITPVVGAEVVTGSSRMKAGTAQKLVLNMLTTGAMIRSGKVFGNLMVDVEATNAKLVERQKKIVIEATDCSREEAESALAACNGHCKTAIVMVLAQLSAEEAKQLLDNNKGFIRAAIAAGK</sequence>